<name>ACT2B_HETMG</name>
<sequence>SAALAGTIIAGASLGFQILDKVLGELGKVSRKIAIGVDNESGGSTTALNAYFRSGTGDVILPEFVPNQKALLYSGRKDTGPVATGAVAAFAYYMSNGHTLGVMFSVPFDYNFYSNWWDVKVYSGKRRADQGMYEDMYYGNPYRGDNGWHQKNLGYGLRMKGIMTSAGEAILQIKISR</sequence>
<evidence type="ECO:0000250" key="1">
    <source>
        <dbReference type="UniProtKB" id="B9W5G6"/>
    </source>
</evidence>
<evidence type="ECO:0000250" key="2">
    <source>
        <dbReference type="UniProtKB" id="P07845"/>
    </source>
</evidence>
<evidence type="ECO:0000250" key="3">
    <source>
        <dbReference type="UniProtKB" id="P39088"/>
    </source>
</evidence>
<evidence type="ECO:0000250" key="4">
    <source>
        <dbReference type="UniProtKB" id="P61914"/>
    </source>
</evidence>
<evidence type="ECO:0000269" key="5">
    <source>
    </source>
</evidence>
<evidence type="ECO:0000303" key="6">
    <source>
    </source>
</evidence>
<evidence type="ECO:0000303" key="7">
    <source>
    </source>
</evidence>
<evidence type="ECO:0000305" key="8"/>
<accession>P0DMX2</accession>
<feature type="chain" id="PRO_0000433581" description="DELTA-stichotoxin-Hmg2b" evidence="5">
    <location>
        <begin position="1"/>
        <end position="177"/>
    </location>
</feature>
<feature type="region of interest" description="Plays an important role in the hemolytic activity" evidence="2">
    <location>
        <begin position="3"/>
        <end position="12"/>
    </location>
</feature>
<feature type="region of interest" description="N-terminal region" evidence="4">
    <location>
        <begin position="11"/>
        <end position="30"/>
    </location>
</feature>
<feature type="binding site" evidence="2">
    <location>
        <position position="54"/>
    </location>
    <ligand>
        <name>phosphocholine</name>
        <dbReference type="ChEBI" id="CHEBI:295975"/>
    </ligand>
</feature>
<feature type="binding site" evidence="2">
    <location>
        <position position="87"/>
    </location>
    <ligand>
        <name>phosphocholine</name>
        <dbReference type="ChEBI" id="CHEBI:295975"/>
    </ligand>
</feature>
<feature type="binding site" evidence="2">
    <location>
        <position position="105"/>
    </location>
    <ligand>
        <name>phosphocholine</name>
        <dbReference type="ChEBI" id="CHEBI:295975"/>
    </ligand>
</feature>
<feature type="binding site" evidence="2">
    <location>
        <position position="107"/>
    </location>
    <ligand>
        <name>phosphocholine</name>
        <dbReference type="ChEBI" id="CHEBI:295975"/>
    </ligand>
</feature>
<feature type="binding site" evidence="2">
    <location>
        <position position="133"/>
    </location>
    <ligand>
        <name>phosphocholine</name>
        <dbReference type="ChEBI" id="CHEBI:295975"/>
    </ligand>
</feature>
<feature type="binding site" evidence="2">
    <location>
        <position position="137"/>
    </location>
    <ligand>
        <name>phosphocholine</name>
        <dbReference type="ChEBI" id="CHEBI:295975"/>
    </ligand>
</feature>
<feature type="binding site" evidence="2">
    <location>
        <position position="138"/>
    </location>
    <ligand>
        <name>phosphocholine</name>
        <dbReference type="ChEBI" id="CHEBI:295975"/>
    </ligand>
</feature>
<feature type="site" description="Important in the initial contact with the lipid membrane" evidence="4">
    <location>
        <position position="113"/>
    </location>
</feature>
<keyword id="KW-0204">Cytolysis</keyword>
<keyword id="KW-0903">Direct protein sequencing</keyword>
<keyword id="KW-0406">Ion transport</keyword>
<keyword id="KW-0472">Membrane</keyword>
<keyword id="KW-0166">Nematocyst</keyword>
<keyword id="KW-0964">Secreted</keyword>
<keyword id="KW-1052">Target cell membrane</keyword>
<keyword id="KW-1053">Target membrane</keyword>
<keyword id="KW-0800">Toxin</keyword>
<keyword id="KW-0812">Transmembrane</keyword>
<keyword id="KW-0813">Transport</keyword>
<proteinExistence type="evidence at protein level"/>
<comment type="function">
    <text evidence="3 5">Pore-forming protein that forms cations-selective hydrophilic pores of around 1 nm and causes cytolysis. Pore formation is a multi-step process that involves specific recognition of membrane sphingomyelin (but neither cholesterol nor phosphatidylcholine) using aromatic rich region and adjacent phosphocholine (POC) binding site, firm binding to the membrane (mainly driven by hydrophobic interactions) accompanied by the transfer of the N-terminal region to the lipid-water interface and finally pore formation after oligomerization of monomers (By similarity) This toxin shows hemolytic activity (PubMed:10665806).</text>
</comment>
<comment type="subunit">
    <text evidence="1">Octamer or nonamer in membranes. Monomer in the soluble state.</text>
</comment>
<comment type="subcellular location">
    <subcellularLocation>
        <location evidence="1">Secreted</location>
    </subcellularLocation>
    <subcellularLocation>
        <location evidence="2">Nematocyst</location>
    </subcellularLocation>
    <subcellularLocation>
        <location evidence="1">Target cell membrane</location>
    </subcellularLocation>
    <text evidence="1">Forms an alpha-helical membrane channel in the prey.</text>
</comment>
<comment type="domain">
    <text evidence="4">Composed of a long N-terminal alpha-helix and a core region rich in beta-sheet structures. Before the pore formation, the alpha-helix binds the lipid membrane, partitions into the lipid-water interface and stabilizes the monomeric molecule on the membrane. Finally, it traverses the bilayer, thus forming the transmembrane pore.</text>
</comment>
<comment type="miscellaneous">
    <text evidence="8">A synonymy between H.magnifica and R.crispa is controversial.</text>
</comment>
<comment type="similarity">
    <text evidence="8">Belongs to the actinoporin family. Sea anemone subfamily.</text>
</comment>
<organism>
    <name type="scientific">Heteractis magnifica</name>
    <name type="common">Magnificent sea anemone</name>
    <name type="synonym">Radianthus magnifica</name>
    <dbReference type="NCBI Taxonomy" id="38281"/>
    <lineage>
        <taxon>Eukaryota</taxon>
        <taxon>Metazoa</taxon>
        <taxon>Cnidaria</taxon>
        <taxon>Anthozoa</taxon>
        <taxon>Hexacorallia</taxon>
        <taxon>Actiniaria</taxon>
        <taxon>Stichodactylidae</taxon>
        <taxon>Heteractis</taxon>
    </lineage>
</organism>
<reference key="1">
    <citation type="journal article" date="2000" name="Toxicon">
        <title>Amino acid sequence studies on cytolytic toxins from sea anemone Heteractis magnifica, Entacmaea quadricolor and Stichodactyla mertensii (Anthozoa).</title>
        <authorList>
            <person name="Samejima Y."/>
            <person name="Yanagisawa M."/>
            <person name="Aoki-Tomomatsu Y."/>
            <person name="Iwasaki E."/>
            <person name="Ando J."/>
            <person name="Mebs D."/>
        </authorList>
    </citation>
    <scope>PROTEIN SEQUENCE</scope>
    <scope>FUNCTION</scope>
</reference>
<reference key="2">
    <citation type="journal article" date="2012" name="Toxicon">
        <title>Development of a rational nomenclature for naming peptide and protein toxins from sea anemones.</title>
        <authorList>
            <person name="Oliveira J.S."/>
            <person name="Fuentes-Silva D."/>
            <person name="King G.F."/>
        </authorList>
    </citation>
    <scope>NOMENCLATURE</scope>
</reference>
<reference key="3">
    <citation type="journal article" date="2009" name="Toxicon">
        <title>Molecular mechanism of pore formation by actinoporins.</title>
        <authorList>
            <person name="Kristan K.C."/>
            <person name="Viero G."/>
            <person name="Dalla Serra M."/>
            <person name="Macek P."/>
            <person name="Anderluh G."/>
        </authorList>
    </citation>
    <scope>REVIEW</scope>
</reference>
<protein>
    <recommendedName>
        <fullName evidence="7">DELTA-stichotoxin-Hmg2b</fullName>
        <shortName evidence="7">DELTA-SHTX-Hmg2b</shortName>
    </recommendedName>
    <alternativeName>
        <fullName evidence="6">Cytolysin HmT</fullName>
    </alternativeName>
    <alternativeName>
        <fullName evidence="6">Hemolytic protein</fullName>
    </alternativeName>
</protein>
<dbReference type="SMR" id="P0DMX2"/>
<dbReference type="GO" id="GO:0005576">
    <property type="term" value="C:extracellular region"/>
    <property type="evidence" value="ECO:0007669"/>
    <property type="project" value="UniProtKB-SubCell"/>
</dbReference>
<dbReference type="GO" id="GO:0042151">
    <property type="term" value="C:nematocyst"/>
    <property type="evidence" value="ECO:0007669"/>
    <property type="project" value="UniProtKB-SubCell"/>
</dbReference>
<dbReference type="GO" id="GO:0044218">
    <property type="term" value="C:other organism cell membrane"/>
    <property type="evidence" value="ECO:0007669"/>
    <property type="project" value="UniProtKB-KW"/>
</dbReference>
<dbReference type="GO" id="GO:0046930">
    <property type="term" value="C:pore complex"/>
    <property type="evidence" value="ECO:0007669"/>
    <property type="project" value="InterPro"/>
</dbReference>
<dbReference type="GO" id="GO:0015267">
    <property type="term" value="F:channel activity"/>
    <property type="evidence" value="ECO:0007669"/>
    <property type="project" value="InterPro"/>
</dbReference>
<dbReference type="GO" id="GO:0090729">
    <property type="term" value="F:toxin activity"/>
    <property type="evidence" value="ECO:0007669"/>
    <property type="project" value="UniProtKB-KW"/>
</dbReference>
<dbReference type="GO" id="GO:0051715">
    <property type="term" value="P:cytolysis in another organism"/>
    <property type="evidence" value="ECO:0007669"/>
    <property type="project" value="InterPro"/>
</dbReference>
<dbReference type="GO" id="GO:0006812">
    <property type="term" value="P:monoatomic cation transport"/>
    <property type="evidence" value="ECO:0007669"/>
    <property type="project" value="InterPro"/>
</dbReference>
<dbReference type="GO" id="GO:0046931">
    <property type="term" value="P:pore complex assembly"/>
    <property type="evidence" value="ECO:0007669"/>
    <property type="project" value="InterPro"/>
</dbReference>
<dbReference type="FunFam" id="2.60.270.20:FF:000001">
    <property type="entry name" value="DELTA-actitoxin-Afr1a"/>
    <property type="match status" value="1"/>
</dbReference>
<dbReference type="Gene3D" id="2.60.270.20">
    <property type="entry name" value="Cytolysin/lectin"/>
    <property type="match status" value="1"/>
</dbReference>
<dbReference type="InterPro" id="IPR050677">
    <property type="entry name" value="Actinoporin_PFT"/>
</dbReference>
<dbReference type="InterPro" id="IPR009104">
    <property type="entry name" value="Anemon_actinoporin-like"/>
</dbReference>
<dbReference type="InterPro" id="IPR015926">
    <property type="entry name" value="Cytolysin/lectin"/>
</dbReference>
<dbReference type="PANTHER" id="PTHR40388">
    <property type="entry name" value="BRYOPORIN"/>
    <property type="match status" value="1"/>
</dbReference>
<dbReference type="PANTHER" id="PTHR40388:SF1">
    <property type="entry name" value="BRYOPORIN"/>
    <property type="match status" value="1"/>
</dbReference>
<dbReference type="Pfam" id="PF06369">
    <property type="entry name" value="Anemone_cytotox"/>
    <property type="match status" value="1"/>
</dbReference>
<dbReference type="SUPFAM" id="SSF63724">
    <property type="entry name" value="Cytolysin/lectin"/>
    <property type="match status" value="1"/>
</dbReference>